<reference key="1">
    <citation type="journal article" date="2001" name="Genome Res.">
        <title>The complete genome sequence of the lactic acid bacterium Lactococcus lactis ssp. lactis IL1403.</title>
        <authorList>
            <person name="Bolotin A."/>
            <person name="Wincker P."/>
            <person name="Mauger S."/>
            <person name="Jaillon O."/>
            <person name="Malarme K."/>
            <person name="Weissenbach J."/>
            <person name="Ehrlich S.D."/>
            <person name="Sorokin A."/>
        </authorList>
    </citation>
    <scope>NUCLEOTIDE SEQUENCE [LARGE SCALE GENOMIC DNA]</scope>
    <source>
        <strain>IL1403</strain>
    </source>
</reference>
<organism>
    <name type="scientific">Lactococcus lactis subsp. lactis (strain IL1403)</name>
    <name type="common">Streptococcus lactis</name>
    <dbReference type="NCBI Taxonomy" id="272623"/>
    <lineage>
        <taxon>Bacteria</taxon>
        <taxon>Bacillati</taxon>
        <taxon>Bacillota</taxon>
        <taxon>Bacilli</taxon>
        <taxon>Lactobacillales</taxon>
        <taxon>Streptococcaceae</taxon>
        <taxon>Lactococcus</taxon>
    </lineage>
</organism>
<name>FOLD_LACLA</name>
<protein>
    <recommendedName>
        <fullName evidence="1">Bifunctional protein FolD</fullName>
    </recommendedName>
    <domain>
        <recommendedName>
            <fullName evidence="1">Methylenetetrahydrofolate dehydrogenase</fullName>
            <ecNumber evidence="1">1.5.1.5</ecNumber>
        </recommendedName>
    </domain>
    <domain>
        <recommendedName>
            <fullName evidence="1">Methenyltetrahydrofolate cyclohydrolase</fullName>
            <ecNumber evidence="1">3.5.4.9</ecNumber>
        </recommendedName>
    </domain>
</protein>
<sequence length="284" mass="31140">MNLIDGKALAAKMQAELKVKVDKLKEADNVPGLAVILVGEDPASQIYVRNKARQATAIGLNSSVVRLPETVSEQELLDLIEQYNQSEQWHGILVQLPLPEHISEEKVLLAIDPEKDVDGFHPMNMGRLWSGNPLMIPSTPAGIMEMFREYDVELSGKRAVVIGRSNIVGKPMAQLLMMADATVTIAHSKTENLRELTKEADVLVVAIGRDRMIKAEDVKEGAVVIDVGMNRDEDGKLHGDVDFDEVKDVASLITPVPGGVGPMTITMLMEQTVRAASRKMNENK</sequence>
<proteinExistence type="inferred from homology"/>
<gene>
    <name evidence="1" type="primary">folD</name>
    <name type="ordered locus">LL0853</name>
    <name type="ORF">L76582</name>
</gene>
<accession>Q9CH85</accession>
<keyword id="KW-0028">Amino-acid biosynthesis</keyword>
<keyword id="KW-0368">Histidine biosynthesis</keyword>
<keyword id="KW-0378">Hydrolase</keyword>
<keyword id="KW-0486">Methionine biosynthesis</keyword>
<keyword id="KW-0511">Multifunctional enzyme</keyword>
<keyword id="KW-0521">NADP</keyword>
<keyword id="KW-0554">One-carbon metabolism</keyword>
<keyword id="KW-0560">Oxidoreductase</keyword>
<keyword id="KW-0658">Purine biosynthesis</keyword>
<keyword id="KW-1185">Reference proteome</keyword>
<evidence type="ECO:0000255" key="1">
    <source>
        <dbReference type="HAMAP-Rule" id="MF_01576"/>
    </source>
</evidence>
<evidence type="ECO:0000305" key="2"/>
<comment type="function">
    <text evidence="1">Catalyzes the oxidation of 5,10-methylenetetrahydrofolate to 5,10-methenyltetrahydrofolate and then the hydrolysis of 5,10-methenyltetrahydrofolate to 10-formyltetrahydrofolate.</text>
</comment>
<comment type="catalytic activity">
    <reaction evidence="1">
        <text>(6R)-5,10-methylene-5,6,7,8-tetrahydrofolate + NADP(+) = (6R)-5,10-methenyltetrahydrofolate + NADPH</text>
        <dbReference type="Rhea" id="RHEA:22812"/>
        <dbReference type="ChEBI" id="CHEBI:15636"/>
        <dbReference type="ChEBI" id="CHEBI:57455"/>
        <dbReference type="ChEBI" id="CHEBI:57783"/>
        <dbReference type="ChEBI" id="CHEBI:58349"/>
        <dbReference type="EC" id="1.5.1.5"/>
    </reaction>
</comment>
<comment type="catalytic activity">
    <reaction evidence="1">
        <text>(6R)-5,10-methenyltetrahydrofolate + H2O = (6R)-10-formyltetrahydrofolate + H(+)</text>
        <dbReference type="Rhea" id="RHEA:23700"/>
        <dbReference type="ChEBI" id="CHEBI:15377"/>
        <dbReference type="ChEBI" id="CHEBI:15378"/>
        <dbReference type="ChEBI" id="CHEBI:57455"/>
        <dbReference type="ChEBI" id="CHEBI:195366"/>
        <dbReference type="EC" id="3.5.4.9"/>
    </reaction>
</comment>
<comment type="pathway">
    <text evidence="1">One-carbon metabolism; tetrahydrofolate interconversion.</text>
</comment>
<comment type="subunit">
    <text evidence="1">Homodimer.</text>
</comment>
<comment type="similarity">
    <text evidence="1">Belongs to the tetrahydrofolate dehydrogenase/cyclohydrolase family.</text>
</comment>
<comment type="sequence caution" evidence="2">
    <conflict type="erroneous initiation">
        <sequence resource="EMBL-CDS" id="AAK04951"/>
    </conflict>
</comment>
<dbReference type="EC" id="1.5.1.5" evidence="1"/>
<dbReference type="EC" id="3.5.4.9" evidence="1"/>
<dbReference type="EMBL" id="AE005176">
    <property type="protein sequence ID" value="AAK04951.1"/>
    <property type="status" value="ALT_INIT"/>
    <property type="molecule type" value="Genomic_DNA"/>
</dbReference>
<dbReference type="PIR" id="E86731">
    <property type="entry name" value="E86731"/>
</dbReference>
<dbReference type="RefSeq" id="NP_267009.1">
    <property type="nucleotide sequence ID" value="NC_002662.1"/>
</dbReference>
<dbReference type="RefSeq" id="WP_003131344.1">
    <property type="nucleotide sequence ID" value="NC_002662.1"/>
</dbReference>
<dbReference type="SMR" id="Q9CH85"/>
<dbReference type="PaxDb" id="272623-L76582"/>
<dbReference type="EnsemblBacteria" id="AAK04951">
    <property type="protein sequence ID" value="AAK04951"/>
    <property type="gene ID" value="L76582"/>
</dbReference>
<dbReference type="KEGG" id="lla:L76582"/>
<dbReference type="PATRIC" id="fig|272623.7.peg.914"/>
<dbReference type="eggNOG" id="COG0190">
    <property type="taxonomic scope" value="Bacteria"/>
</dbReference>
<dbReference type="HOGENOM" id="CLU_034045_2_1_9"/>
<dbReference type="OrthoDB" id="9803580at2"/>
<dbReference type="UniPathway" id="UPA00193"/>
<dbReference type="Proteomes" id="UP000002196">
    <property type="component" value="Chromosome"/>
</dbReference>
<dbReference type="GO" id="GO:0005829">
    <property type="term" value="C:cytosol"/>
    <property type="evidence" value="ECO:0007669"/>
    <property type="project" value="TreeGrafter"/>
</dbReference>
<dbReference type="GO" id="GO:0004477">
    <property type="term" value="F:methenyltetrahydrofolate cyclohydrolase activity"/>
    <property type="evidence" value="ECO:0007669"/>
    <property type="project" value="UniProtKB-UniRule"/>
</dbReference>
<dbReference type="GO" id="GO:0004488">
    <property type="term" value="F:methylenetetrahydrofolate dehydrogenase (NADP+) activity"/>
    <property type="evidence" value="ECO:0007669"/>
    <property type="project" value="UniProtKB-UniRule"/>
</dbReference>
<dbReference type="GO" id="GO:0000105">
    <property type="term" value="P:L-histidine biosynthetic process"/>
    <property type="evidence" value="ECO:0007669"/>
    <property type="project" value="UniProtKB-KW"/>
</dbReference>
<dbReference type="GO" id="GO:0009086">
    <property type="term" value="P:methionine biosynthetic process"/>
    <property type="evidence" value="ECO:0007669"/>
    <property type="project" value="UniProtKB-KW"/>
</dbReference>
<dbReference type="GO" id="GO:0006164">
    <property type="term" value="P:purine nucleotide biosynthetic process"/>
    <property type="evidence" value="ECO:0007669"/>
    <property type="project" value="UniProtKB-KW"/>
</dbReference>
<dbReference type="GO" id="GO:0035999">
    <property type="term" value="P:tetrahydrofolate interconversion"/>
    <property type="evidence" value="ECO:0007669"/>
    <property type="project" value="UniProtKB-UniRule"/>
</dbReference>
<dbReference type="CDD" id="cd01080">
    <property type="entry name" value="NAD_bind_m-THF_DH_Cyclohyd"/>
    <property type="match status" value="1"/>
</dbReference>
<dbReference type="FunFam" id="3.40.50.10860:FF:000001">
    <property type="entry name" value="Bifunctional protein FolD"/>
    <property type="match status" value="1"/>
</dbReference>
<dbReference type="FunFam" id="3.40.50.720:FF:000094">
    <property type="entry name" value="Bifunctional protein FolD"/>
    <property type="match status" value="1"/>
</dbReference>
<dbReference type="Gene3D" id="3.40.50.10860">
    <property type="entry name" value="Leucine Dehydrogenase, chain A, domain 1"/>
    <property type="match status" value="1"/>
</dbReference>
<dbReference type="Gene3D" id="3.40.50.720">
    <property type="entry name" value="NAD(P)-binding Rossmann-like Domain"/>
    <property type="match status" value="1"/>
</dbReference>
<dbReference type="HAMAP" id="MF_01576">
    <property type="entry name" value="THF_DHG_CYH"/>
    <property type="match status" value="1"/>
</dbReference>
<dbReference type="InterPro" id="IPR046346">
    <property type="entry name" value="Aminoacid_DH-like_N_sf"/>
</dbReference>
<dbReference type="InterPro" id="IPR036291">
    <property type="entry name" value="NAD(P)-bd_dom_sf"/>
</dbReference>
<dbReference type="InterPro" id="IPR000672">
    <property type="entry name" value="THF_DH/CycHdrlase"/>
</dbReference>
<dbReference type="InterPro" id="IPR020630">
    <property type="entry name" value="THF_DH/CycHdrlase_cat_dom"/>
</dbReference>
<dbReference type="InterPro" id="IPR020867">
    <property type="entry name" value="THF_DH/CycHdrlase_CS"/>
</dbReference>
<dbReference type="InterPro" id="IPR020631">
    <property type="entry name" value="THF_DH/CycHdrlase_NAD-bd_dom"/>
</dbReference>
<dbReference type="NCBIfam" id="NF008058">
    <property type="entry name" value="PRK10792.1"/>
    <property type="match status" value="1"/>
</dbReference>
<dbReference type="NCBIfam" id="NF010776">
    <property type="entry name" value="PRK14179.1"/>
    <property type="match status" value="1"/>
</dbReference>
<dbReference type="NCBIfam" id="NF010783">
    <property type="entry name" value="PRK14186.1"/>
    <property type="match status" value="1"/>
</dbReference>
<dbReference type="PANTHER" id="PTHR48099:SF5">
    <property type="entry name" value="C-1-TETRAHYDROFOLATE SYNTHASE, CYTOPLASMIC"/>
    <property type="match status" value="1"/>
</dbReference>
<dbReference type="PANTHER" id="PTHR48099">
    <property type="entry name" value="C-1-TETRAHYDROFOLATE SYNTHASE, CYTOPLASMIC-RELATED"/>
    <property type="match status" value="1"/>
</dbReference>
<dbReference type="Pfam" id="PF00763">
    <property type="entry name" value="THF_DHG_CYH"/>
    <property type="match status" value="1"/>
</dbReference>
<dbReference type="Pfam" id="PF02882">
    <property type="entry name" value="THF_DHG_CYH_C"/>
    <property type="match status" value="1"/>
</dbReference>
<dbReference type="PRINTS" id="PR00085">
    <property type="entry name" value="THFDHDRGNASE"/>
</dbReference>
<dbReference type="SUPFAM" id="SSF53223">
    <property type="entry name" value="Aminoacid dehydrogenase-like, N-terminal domain"/>
    <property type="match status" value="1"/>
</dbReference>
<dbReference type="SUPFAM" id="SSF51735">
    <property type="entry name" value="NAD(P)-binding Rossmann-fold domains"/>
    <property type="match status" value="1"/>
</dbReference>
<dbReference type="PROSITE" id="PS00766">
    <property type="entry name" value="THF_DHG_CYH_1"/>
    <property type="match status" value="1"/>
</dbReference>
<dbReference type="PROSITE" id="PS00767">
    <property type="entry name" value="THF_DHG_CYH_2"/>
    <property type="match status" value="1"/>
</dbReference>
<feature type="chain" id="PRO_0000268380" description="Bifunctional protein FolD">
    <location>
        <begin position="1"/>
        <end position="284"/>
    </location>
</feature>
<feature type="binding site" evidence="1">
    <location>
        <begin position="163"/>
        <end position="165"/>
    </location>
    <ligand>
        <name>NADP(+)</name>
        <dbReference type="ChEBI" id="CHEBI:58349"/>
    </ligand>
</feature>
<feature type="binding site" evidence="1">
    <location>
        <position position="188"/>
    </location>
    <ligand>
        <name>NADP(+)</name>
        <dbReference type="ChEBI" id="CHEBI:58349"/>
    </ligand>
</feature>